<comment type="function">
    <text evidence="1">Catalyzes the reversible conversion of 3-phosphohydroxypyruvate to phosphoserine and of 3-hydroxy-2-oxo-4-phosphonooxybutanoate to phosphohydroxythreonine.</text>
</comment>
<comment type="catalytic activity">
    <reaction evidence="1">
        <text>O-phospho-L-serine + 2-oxoglutarate = 3-phosphooxypyruvate + L-glutamate</text>
        <dbReference type="Rhea" id="RHEA:14329"/>
        <dbReference type="ChEBI" id="CHEBI:16810"/>
        <dbReference type="ChEBI" id="CHEBI:18110"/>
        <dbReference type="ChEBI" id="CHEBI:29985"/>
        <dbReference type="ChEBI" id="CHEBI:57524"/>
        <dbReference type="EC" id="2.6.1.52"/>
    </reaction>
</comment>
<comment type="catalytic activity">
    <reaction evidence="1">
        <text>4-(phosphooxy)-L-threonine + 2-oxoglutarate = (R)-3-hydroxy-2-oxo-4-phosphooxybutanoate + L-glutamate</text>
        <dbReference type="Rhea" id="RHEA:16573"/>
        <dbReference type="ChEBI" id="CHEBI:16810"/>
        <dbReference type="ChEBI" id="CHEBI:29985"/>
        <dbReference type="ChEBI" id="CHEBI:58452"/>
        <dbReference type="ChEBI" id="CHEBI:58538"/>
        <dbReference type="EC" id="2.6.1.52"/>
    </reaction>
</comment>
<comment type="cofactor">
    <cofactor evidence="1">
        <name>pyridoxal 5'-phosphate</name>
        <dbReference type="ChEBI" id="CHEBI:597326"/>
    </cofactor>
    <text evidence="1">Binds 1 pyridoxal phosphate per subunit.</text>
</comment>
<comment type="pathway">
    <text evidence="1">Amino-acid biosynthesis; L-serine biosynthesis; L-serine from 3-phospho-D-glycerate: step 2/3.</text>
</comment>
<comment type="pathway">
    <text evidence="1">Cofactor biosynthesis; pyridoxine 5'-phosphate biosynthesis; pyridoxine 5'-phosphate from D-erythrose 4-phosphate: step 3/5.</text>
</comment>
<comment type="subunit">
    <text evidence="1">Homodimer.</text>
</comment>
<comment type="subcellular location">
    <subcellularLocation>
        <location evidence="1">Cytoplasm</location>
    </subcellularLocation>
</comment>
<comment type="similarity">
    <text evidence="1">Belongs to the class-V pyridoxal-phosphate-dependent aminotransferase family. SerC subfamily.</text>
</comment>
<protein>
    <recommendedName>
        <fullName evidence="1">Phosphoserine aminotransferase</fullName>
        <ecNumber evidence="1">2.6.1.52</ecNumber>
    </recommendedName>
    <alternativeName>
        <fullName evidence="1">Phosphohydroxythreonine aminotransferase</fullName>
        <shortName evidence="1">PSAT</shortName>
    </alternativeName>
</protein>
<keyword id="KW-0028">Amino-acid biosynthesis</keyword>
<keyword id="KW-0032">Aminotransferase</keyword>
<keyword id="KW-0963">Cytoplasm</keyword>
<keyword id="KW-0663">Pyridoxal phosphate</keyword>
<keyword id="KW-0664">Pyridoxine biosynthesis</keyword>
<keyword id="KW-1185">Reference proteome</keyword>
<keyword id="KW-0718">Serine biosynthesis</keyword>
<keyword id="KW-0808">Transferase</keyword>
<evidence type="ECO:0000255" key="1">
    <source>
        <dbReference type="HAMAP-Rule" id="MF_00160"/>
    </source>
</evidence>
<organism>
    <name type="scientific">Nocardioides sp. (strain ATCC BAA-499 / JS614)</name>
    <dbReference type="NCBI Taxonomy" id="196162"/>
    <lineage>
        <taxon>Bacteria</taxon>
        <taxon>Bacillati</taxon>
        <taxon>Actinomycetota</taxon>
        <taxon>Actinomycetes</taxon>
        <taxon>Propionibacteriales</taxon>
        <taxon>Nocardioidaceae</taxon>
        <taxon>Nocardioides</taxon>
    </lineage>
</organism>
<name>SERC_NOCSJ</name>
<gene>
    <name evidence="1" type="primary">serC</name>
    <name type="ordered locus">Noca_0730</name>
</gene>
<dbReference type="EC" id="2.6.1.52" evidence="1"/>
<dbReference type="EMBL" id="CP000509">
    <property type="protein sequence ID" value="ABL80255.1"/>
    <property type="molecule type" value="Genomic_DNA"/>
</dbReference>
<dbReference type="RefSeq" id="WP_011754204.1">
    <property type="nucleotide sequence ID" value="NC_008699.1"/>
</dbReference>
<dbReference type="SMR" id="A1SEM0"/>
<dbReference type="STRING" id="196162.Noca_0730"/>
<dbReference type="KEGG" id="nca:Noca_0730"/>
<dbReference type="eggNOG" id="COG1932">
    <property type="taxonomic scope" value="Bacteria"/>
</dbReference>
<dbReference type="HOGENOM" id="CLU_061974_0_0_11"/>
<dbReference type="OrthoDB" id="975012at2"/>
<dbReference type="UniPathway" id="UPA00135">
    <property type="reaction ID" value="UER00197"/>
</dbReference>
<dbReference type="UniPathway" id="UPA00244">
    <property type="reaction ID" value="UER00311"/>
</dbReference>
<dbReference type="Proteomes" id="UP000000640">
    <property type="component" value="Chromosome"/>
</dbReference>
<dbReference type="GO" id="GO:0005737">
    <property type="term" value="C:cytoplasm"/>
    <property type="evidence" value="ECO:0007669"/>
    <property type="project" value="UniProtKB-SubCell"/>
</dbReference>
<dbReference type="GO" id="GO:0008453">
    <property type="term" value="F:alanine-glyoxylate transaminase activity"/>
    <property type="evidence" value="ECO:0007669"/>
    <property type="project" value="TreeGrafter"/>
</dbReference>
<dbReference type="GO" id="GO:0004760">
    <property type="term" value="F:L-serine-pyruvate transaminase activity"/>
    <property type="evidence" value="ECO:0007669"/>
    <property type="project" value="TreeGrafter"/>
</dbReference>
<dbReference type="GO" id="GO:0004648">
    <property type="term" value="F:O-phospho-L-serine:2-oxoglutarate aminotransferase activity"/>
    <property type="evidence" value="ECO:0007669"/>
    <property type="project" value="UniProtKB-UniRule"/>
</dbReference>
<dbReference type="GO" id="GO:0030170">
    <property type="term" value="F:pyridoxal phosphate binding"/>
    <property type="evidence" value="ECO:0007669"/>
    <property type="project" value="UniProtKB-UniRule"/>
</dbReference>
<dbReference type="GO" id="GO:0019265">
    <property type="term" value="P:glycine biosynthetic process, by transamination of glyoxylate"/>
    <property type="evidence" value="ECO:0007669"/>
    <property type="project" value="TreeGrafter"/>
</dbReference>
<dbReference type="GO" id="GO:0006564">
    <property type="term" value="P:L-serine biosynthetic process"/>
    <property type="evidence" value="ECO:0007669"/>
    <property type="project" value="UniProtKB-UniRule"/>
</dbReference>
<dbReference type="GO" id="GO:0008615">
    <property type="term" value="P:pyridoxine biosynthetic process"/>
    <property type="evidence" value="ECO:0007669"/>
    <property type="project" value="UniProtKB-UniRule"/>
</dbReference>
<dbReference type="Gene3D" id="3.90.1150.10">
    <property type="entry name" value="Aspartate Aminotransferase, domain 1"/>
    <property type="match status" value="1"/>
</dbReference>
<dbReference type="Gene3D" id="3.40.640.10">
    <property type="entry name" value="Type I PLP-dependent aspartate aminotransferase-like (Major domain)"/>
    <property type="match status" value="1"/>
</dbReference>
<dbReference type="HAMAP" id="MF_00160">
    <property type="entry name" value="SerC_aminotrans_5"/>
    <property type="match status" value="1"/>
</dbReference>
<dbReference type="InterPro" id="IPR000192">
    <property type="entry name" value="Aminotrans_V_dom"/>
</dbReference>
<dbReference type="InterPro" id="IPR022278">
    <property type="entry name" value="Pser_aminoTfrase"/>
</dbReference>
<dbReference type="InterPro" id="IPR006272">
    <property type="entry name" value="Pser_aminoTfrase_mycobac"/>
</dbReference>
<dbReference type="InterPro" id="IPR015424">
    <property type="entry name" value="PyrdxlP-dep_Trfase"/>
</dbReference>
<dbReference type="InterPro" id="IPR015421">
    <property type="entry name" value="PyrdxlP-dep_Trfase_major"/>
</dbReference>
<dbReference type="InterPro" id="IPR015422">
    <property type="entry name" value="PyrdxlP-dep_Trfase_small"/>
</dbReference>
<dbReference type="NCBIfam" id="TIGR01366">
    <property type="entry name" value="serC_3"/>
    <property type="match status" value="1"/>
</dbReference>
<dbReference type="PANTHER" id="PTHR21152:SF40">
    <property type="entry name" value="ALANINE--GLYOXYLATE AMINOTRANSFERASE"/>
    <property type="match status" value="1"/>
</dbReference>
<dbReference type="PANTHER" id="PTHR21152">
    <property type="entry name" value="AMINOTRANSFERASE CLASS V"/>
    <property type="match status" value="1"/>
</dbReference>
<dbReference type="Pfam" id="PF00266">
    <property type="entry name" value="Aminotran_5"/>
    <property type="match status" value="1"/>
</dbReference>
<dbReference type="PIRSF" id="PIRSF000525">
    <property type="entry name" value="SerC"/>
    <property type="match status" value="1"/>
</dbReference>
<dbReference type="SUPFAM" id="SSF53383">
    <property type="entry name" value="PLP-dependent transferases"/>
    <property type="match status" value="1"/>
</dbReference>
<reference key="1">
    <citation type="submission" date="2006-12" db="EMBL/GenBank/DDBJ databases">
        <title>Complete sequence of chromosome 1 of Nocardioides sp. JS614.</title>
        <authorList>
            <person name="Copeland A."/>
            <person name="Lucas S."/>
            <person name="Lapidus A."/>
            <person name="Barry K."/>
            <person name="Detter J.C."/>
            <person name="Glavina del Rio T."/>
            <person name="Hammon N."/>
            <person name="Israni S."/>
            <person name="Dalin E."/>
            <person name="Tice H."/>
            <person name="Pitluck S."/>
            <person name="Thompson L.S."/>
            <person name="Brettin T."/>
            <person name="Bruce D."/>
            <person name="Han C."/>
            <person name="Tapia R."/>
            <person name="Schmutz J."/>
            <person name="Larimer F."/>
            <person name="Land M."/>
            <person name="Hauser L."/>
            <person name="Kyrpides N."/>
            <person name="Kim E."/>
            <person name="Mattes T."/>
            <person name="Gossett J."/>
            <person name="Richardson P."/>
        </authorList>
    </citation>
    <scope>NUCLEOTIDE SEQUENCE [LARGE SCALE GENOMIC DNA]</scope>
    <source>
        <strain>ATCC BAA-499 / JS614</strain>
    </source>
</reference>
<sequence length="374" mass="39758">MTDALQIPRDLLPADGRFGAGPSKIQTAHLDALAATGSTLMGTSHRQAPVRDLVGRVRSGLAELFSLPDGYQVVLGNGGATAFWDIATYGLIQERSQHLTFGEFSSKFAKAAKAAPWLADPSVIASEPGSRPAPVAEDGVDAYAWAHNETSTAVMAPVVRPAGTSSDSSLVLVDATSGAGGLPVDLREVDVYYFAPQKCFASDGGLWIALFSPAALERAATVAASGRHIPAFFDLPTAIDNSAKNQTYNTPAVATLFLMAEQLDWMNASGGLDGMVARTTESSDTLYTWAEKSPYAFPYVTDPDHRSLVIGTIDFEDGIDAARVAAVLRANGVVDTEPYRKLGRNQLRIAMYPAVDPADVEALTRSIDWVVDHL</sequence>
<proteinExistence type="inferred from homology"/>
<accession>A1SEM0</accession>
<feature type="chain" id="PRO_1000058219" description="Phosphoserine aminotransferase">
    <location>
        <begin position="1"/>
        <end position="374"/>
    </location>
</feature>
<feature type="binding site" evidence="1">
    <location>
        <position position="46"/>
    </location>
    <ligand>
        <name>L-glutamate</name>
        <dbReference type="ChEBI" id="CHEBI:29985"/>
    </ligand>
</feature>
<feature type="binding site" evidence="1">
    <location>
        <begin position="80"/>
        <end position="81"/>
    </location>
    <ligand>
        <name>pyridoxal 5'-phosphate</name>
        <dbReference type="ChEBI" id="CHEBI:597326"/>
    </ligand>
</feature>
<feature type="binding site" evidence="1">
    <location>
        <position position="104"/>
    </location>
    <ligand>
        <name>pyridoxal 5'-phosphate</name>
        <dbReference type="ChEBI" id="CHEBI:597326"/>
    </ligand>
</feature>
<feature type="binding site" evidence="1">
    <location>
        <position position="150"/>
    </location>
    <ligand>
        <name>pyridoxal 5'-phosphate</name>
        <dbReference type="ChEBI" id="CHEBI:597326"/>
    </ligand>
</feature>
<feature type="binding site" evidence="1">
    <location>
        <position position="174"/>
    </location>
    <ligand>
        <name>pyridoxal 5'-phosphate</name>
        <dbReference type="ChEBI" id="CHEBI:597326"/>
    </ligand>
</feature>
<feature type="binding site" evidence="1">
    <location>
        <position position="197"/>
    </location>
    <ligand>
        <name>pyridoxal 5'-phosphate</name>
        <dbReference type="ChEBI" id="CHEBI:597326"/>
    </ligand>
</feature>
<feature type="binding site" evidence="1">
    <location>
        <begin position="249"/>
        <end position="250"/>
    </location>
    <ligand>
        <name>pyridoxal 5'-phosphate</name>
        <dbReference type="ChEBI" id="CHEBI:597326"/>
    </ligand>
</feature>
<feature type="modified residue" description="N6-(pyridoxal phosphate)lysine" evidence="1">
    <location>
        <position position="198"/>
    </location>
</feature>